<proteinExistence type="evidence at protein level"/>
<evidence type="ECO:0000255" key="1">
    <source>
        <dbReference type="PROSITE-ProRule" id="PRU01180"/>
    </source>
</evidence>
<evidence type="ECO:0000256" key="2">
    <source>
        <dbReference type="SAM" id="MobiDB-lite"/>
    </source>
</evidence>
<evidence type="ECO:0000269" key="3">
    <source>
    </source>
</evidence>
<evidence type="ECO:0000269" key="4">
    <source>
    </source>
</evidence>
<gene>
    <name type="ORF">SPAC30C2.07</name>
</gene>
<keyword id="KW-0963">Cytoplasm</keyword>
<keyword id="KW-0597">Phosphoprotein</keyword>
<keyword id="KW-1185">Reference proteome</keyword>
<organism>
    <name type="scientific">Schizosaccharomyces pombe (strain 972 / ATCC 24843)</name>
    <name type="common">Fission yeast</name>
    <dbReference type="NCBI Taxonomy" id="284812"/>
    <lineage>
        <taxon>Eukaryota</taxon>
        <taxon>Fungi</taxon>
        <taxon>Dikarya</taxon>
        <taxon>Ascomycota</taxon>
        <taxon>Taphrinomycotina</taxon>
        <taxon>Schizosaccharomycetes</taxon>
        <taxon>Schizosaccharomycetales</taxon>
        <taxon>Schizosaccharomycetaceae</taxon>
        <taxon>Schizosaccharomyces</taxon>
    </lineage>
</organism>
<comment type="subcellular location">
    <subcellularLocation>
        <location evidence="3">Cytoplasm</location>
    </subcellularLocation>
</comment>
<accession>Q9P6K4</accession>
<feature type="chain" id="PRO_0000304039" description="Uncharacterized protein C30C2.07">
    <location>
        <begin position="1"/>
        <end position="842"/>
    </location>
</feature>
<feature type="domain" description="uDENN FNIP1/2-type" evidence="1">
    <location>
        <begin position="35"/>
        <end position="422"/>
    </location>
</feature>
<feature type="domain" description="cDENN FNIP1/2-type" evidence="1">
    <location>
        <begin position="430"/>
        <end position="772"/>
    </location>
</feature>
<feature type="domain" description="dDENN FNIP1/2-type" evidence="1">
    <location>
        <begin position="777"/>
        <end position="842"/>
    </location>
</feature>
<feature type="region of interest" description="Disordered" evidence="2">
    <location>
        <begin position="1"/>
        <end position="20"/>
    </location>
</feature>
<feature type="region of interest" description="Disordered" evidence="2">
    <location>
        <begin position="142"/>
        <end position="209"/>
    </location>
</feature>
<feature type="compositionally biased region" description="Polar residues" evidence="2">
    <location>
        <begin position="183"/>
        <end position="209"/>
    </location>
</feature>
<feature type="modified residue" description="Phosphoserine" evidence="4">
    <location>
        <position position="573"/>
    </location>
</feature>
<feature type="modified residue" description="Phosphoserine" evidence="4">
    <location>
        <position position="590"/>
    </location>
</feature>
<sequence>MLHFLFHSGSSSNRNSSPKESYELLHGLDKQYQSTKDVTFRLVLVQDIGDRKKTVLFDSNHVDGQKGDSVLRDSANAPLTDLMFGAIPISHKGTTTKLHILHPPNPATRSYMLTQLFQINTHGTVVNSSHETIASATSLFENSSSNFSEDPNKPNSSDAFESNKEDSPLLKSFNDSAIPENAANLSSSSKNMKDSTLSSQKARSNTSSSFLTPLHEQLESRCALHTAAKDPFRSKNSLRCNRGHSPLSSQQILPAISNNTSEKPDSNNCGFLLPSNSTSIKDLKNVKKGNRLNSPPFITIPQSIKNTNSNFLLSSPSLFSDTRTRPASYALALIITVPYEYDEIVHPVSTYYTMLSNFTLSLQKEIDERIRNLLFVSLSSGGDNKNDTGIPLIQSSSSKVGFGPYALSKDLITAKSFHKCILLLKTGFSAPLIKPSVFSGSKWVENMRLLTDLCKSPAQKCLFSNLLTATRKFCLERQKDDVTFKVLLQSSKAPIARRFLYLLAPLMRPSIAQCSDTLLNPIQLYPNSGILSSSSLSTSFGCPSVSGSLRVPSYDMKINDSCKAIDIHSEKPSFADSPRKTSLRNYLSSSWRLKFMRSSYQNNETDPLNPTSGSFLRQPMQYSSPSGVSESAASSFLDIENIDEYLESAENMKYLPRSTVGPGGMLHVDLLETNAKQESEATTSTVPPSPSQVGFLKALHPSFDLQAAPPNSYVSFSDDDFISATLLYMLEDVSRNKSQLLAEKKHLKSQLMVANLDTYSLDCYEIHEFPSEWENDYAPFLLKEHHKVIGETYVSSFDIQQGCFNVIKRRLSSYKWDKSDDSFVSEVLKGDLKEVLRVCSHC</sequence>
<protein>
    <recommendedName>
        <fullName>Uncharacterized protein C30C2.07</fullName>
    </recommendedName>
</protein>
<reference key="1">
    <citation type="journal article" date="2002" name="Nature">
        <title>The genome sequence of Schizosaccharomyces pombe.</title>
        <authorList>
            <person name="Wood V."/>
            <person name="Gwilliam R."/>
            <person name="Rajandream M.A."/>
            <person name="Lyne M.H."/>
            <person name="Lyne R."/>
            <person name="Stewart A."/>
            <person name="Sgouros J.G."/>
            <person name="Peat N."/>
            <person name="Hayles J."/>
            <person name="Baker S.G."/>
            <person name="Basham D."/>
            <person name="Bowman S."/>
            <person name="Brooks K."/>
            <person name="Brown D."/>
            <person name="Brown S."/>
            <person name="Chillingworth T."/>
            <person name="Churcher C.M."/>
            <person name="Collins M."/>
            <person name="Connor R."/>
            <person name="Cronin A."/>
            <person name="Davis P."/>
            <person name="Feltwell T."/>
            <person name="Fraser A."/>
            <person name="Gentles S."/>
            <person name="Goble A."/>
            <person name="Hamlin N."/>
            <person name="Harris D.E."/>
            <person name="Hidalgo J."/>
            <person name="Hodgson G."/>
            <person name="Holroyd S."/>
            <person name="Hornsby T."/>
            <person name="Howarth S."/>
            <person name="Huckle E.J."/>
            <person name="Hunt S."/>
            <person name="Jagels K."/>
            <person name="James K.D."/>
            <person name="Jones L."/>
            <person name="Jones M."/>
            <person name="Leather S."/>
            <person name="McDonald S."/>
            <person name="McLean J."/>
            <person name="Mooney P."/>
            <person name="Moule S."/>
            <person name="Mungall K.L."/>
            <person name="Murphy L.D."/>
            <person name="Niblett D."/>
            <person name="Odell C."/>
            <person name="Oliver K."/>
            <person name="O'Neil S."/>
            <person name="Pearson D."/>
            <person name="Quail M.A."/>
            <person name="Rabbinowitsch E."/>
            <person name="Rutherford K.M."/>
            <person name="Rutter S."/>
            <person name="Saunders D."/>
            <person name="Seeger K."/>
            <person name="Sharp S."/>
            <person name="Skelton J."/>
            <person name="Simmonds M.N."/>
            <person name="Squares R."/>
            <person name="Squares S."/>
            <person name="Stevens K."/>
            <person name="Taylor K."/>
            <person name="Taylor R.G."/>
            <person name="Tivey A."/>
            <person name="Walsh S.V."/>
            <person name="Warren T."/>
            <person name="Whitehead S."/>
            <person name="Woodward J.R."/>
            <person name="Volckaert G."/>
            <person name="Aert R."/>
            <person name="Robben J."/>
            <person name="Grymonprez B."/>
            <person name="Weltjens I."/>
            <person name="Vanstreels E."/>
            <person name="Rieger M."/>
            <person name="Schaefer M."/>
            <person name="Mueller-Auer S."/>
            <person name="Gabel C."/>
            <person name="Fuchs M."/>
            <person name="Duesterhoeft A."/>
            <person name="Fritzc C."/>
            <person name="Holzer E."/>
            <person name="Moestl D."/>
            <person name="Hilbert H."/>
            <person name="Borzym K."/>
            <person name="Langer I."/>
            <person name="Beck A."/>
            <person name="Lehrach H."/>
            <person name="Reinhardt R."/>
            <person name="Pohl T.M."/>
            <person name="Eger P."/>
            <person name="Zimmermann W."/>
            <person name="Wedler H."/>
            <person name="Wambutt R."/>
            <person name="Purnelle B."/>
            <person name="Goffeau A."/>
            <person name="Cadieu E."/>
            <person name="Dreano S."/>
            <person name="Gloux S."/>
            <person name="Lelaure V."/>
            <person name="Mottier S."/>
            <person name="Galibert F."/>
            <person name="Aves S.J."/>
            <person name="Xiang Z."/>
            <person name="Hunt C."/>
            <person name="Moore K."/>
            <person name="Hurst S.M."/>
            <person name="Lucas M."/>
            <person name="Rochet M."/>
            <person name="Gaillardin C."/>
            <person name="Tallada V.A."/>
            <person name="Garzon A."/>
            <person name="Thode G."/>
            <person name="Daga R.R."/>
            <person name="Cruzado L."/>
            <person name="Jimenez J."/>
            <person name="Sanchez M."/>
            <person name="del Rey F."/>
            <person name="Benito J."/>
            <person name="Dominguez A."/>
            <person name="Revuelta J.L."/>
            <person name="Moreno S."/>
            <person name="Armstrong J."/>
            <person name="Forsburg S.L."/>
            <person name="Cerutti L."/>
            <person name="Lowe T."/>
            <person name="McCombie W.R."/>
            <person name="Paulsen I."/>
            <person name="Potashkin J."/>
            <person name="Shpakovski G.V."/>
            <person name="Ussery D."/>
            <person name="Barrell B.G."/>
            <person name="Nurse P."/>
        </authorList>
    </citation>
    <scope>NUCLEOTIDE SEQUENCE [LARGE SCALE GENOMIC DNA]</scope>
    <source>
        <strain>972 / ATCC 24843</strain>
    </source>
</reference>
<reference key="2">
    <citation type="journal article" date="2006" name="Nat. Biotechnol.">
        <title>ORFeome cloning and global analysis of protein localization in the fission yeast Schizosaccharomyces pombe.</title>
        <authorList>
            <person name="Matsuyama A."/>
            <person name="Arai R."/>
            <person name="Yashiroda Y."/>
            <person name="Shirai A."/>
            <person name="Kamata A."/>
            <person name="Sekido S."/>
            <person name="Kobayashi Y."/>
            <person name="Hashimoto A."/>
            <person name="Hamamoto M."/>
            <person name="Hiraoka Y."/>
            <person name="Horinouchi S."/>
            <person name="Yoshida M."/>
        </authorList>
    </citation>
    <scope>SUBCELLULAR LOCATION [LARGE SCALE ANALYSIS]</scope>
</reference>
<reference key="3">
    <citation type="journal article" date="2008" name="J. Proteome Res.">
        <title>Phosphoproteome analysis of fission yeast.</title>
        <authorList>
            <person name="Wilson-Grady J.T."/>
            <person name="Villen J."/>
            <person name="Gygi S.P."/>
        </authorList>
    </citation>
    <scope>PHOSPHORYLATION [LARGE SCALE ANALYSIS] AT SER-573 AND SER-590</scope>
    <scope>IDENTIFICATION BY MASS SPECTROMETRY</scope>
</reference>
<name>YLF7_SCHPO</name>
<dbReference type="EMBL" id="CU329670">
    <property type="protein sequence ID" value="CAB90794.1"/>
    <property type="molecule type" value="Genomic_DNA"/>
</dbReference>
<dbReference type="BioGRID" id="279509">
    <property type="interactions" value="27"/>
</dbReference>
<dbReference type="STRING" id="284812.Q9P6K4"/>
<dbReference type="iPTMnet" id="Q9P6K4"/>
<dbReference type="PaxDb" id="4896-SPAC30C2.07.1"/>
<dbReference type="EnsemblFungi" id="SPAC30C2.07.1">
    <property type="protein sequence ID" value="SPAC30C2.07.1:pep"/>
    <property type="gene ID" value="SPAC30C2.07"/>
</dbReference>
<dbReference type="KEGG" id="spo:2543076"/>
<dbReference type="PomBase" id="SPAC30C2.07"/>
<dbReference type="VEuPathDB" id="FungiDB:SPAC30C2.07"/>
<dbReference type="eggNOG" id="ENOG502R9AK">
    <property type="taxonomic scope" value="Eukaryota"/>
</dbReference>
<dbReference type="HOGENOM" id="CLU_338068_0_0_1"/>
<dbReference type="InParanoid" id="Q9P6K4"/>
<dbReference type="OMA" id="YMLTQLF"/>
<dbReference type="PRO" id="PR:Q9P6K4"/>
<dbReference type="Proteomes" id="UP000002485">
    <property type="component" value="Chromosome I"/>
</dbReference>
<dbReference type="GO" id="GO:1990877">
    <property type="term" value="C:FNIP-folliculin RagC/D GAP"/>
    <property type="evidence" value="ECO:0000269"/>
    <property type="project" value="PomBase"/>
</dbReference>
<dbReference type="GO" id="GO:0005774">
    <property type="term" value="C:vacuolar membrane"/>
    <property type="evidence" value="ECO:0000269"/>
    <property type="project" value="PomBase"/>
</dbReference>
<dbReference type="GO" id="GO:1904262">
    <property type="term" value="P:negative regulation of TORC1 signaling"/>
    <property type="evidence" value="ECO:0000269"/>
    <property type="project" value="PomBase"/>
</dbReference>
<dbReference type="GO" id="GO:1904263">
    <property type="term" value="P:positive regulation of TORC1 signaling"/>
    <property type="evidence" value="ECO:0000269"/>
    <property type="project" value="PomBase"/>
</dbReference>
<dbReference type="InterPro" id="IPR037545">
    <property type="entry name" value="DENN_FNIP1/2"/>
</dbReference>
<dbReference type="InterPro" id="IPR028084">
    <property type="entry name" value="FNIP_N_dom"/>
</dbReference>
<dbReference type="Pfam" id="PF14636">
    <property type="entry name" value="FNIP_N"/>
    <property type="match status" value="1"/>
</dbReference>
<dbReference type="PROSITE" id="PS51836">
    <property type="entry name" value="DENN_FNIP12"/>
    <property type="match status" value="1"/>
</dbReference>